<protein>
    <recommendedName>
        <fullName evidence="1">ATP-dependent protease subunit HslV</fullName>
        <ecNumber evidence="1">3.4.25.2</ecNumber>
    </recommendedName>
</protein>
<evidence type="ECO:0000255" key="1">
    <source>
        <dbReference type="HAMAP-Rule" id="MF_00248"/>
    </source>
</evidence>
<feature type="chain" id="PRO_1000125410" description="ATP-dependent protease subunit HslV">
    <location>
        <begin position="1"/>
        <end position="179"/>
    </location>
</feature>
<feature type="active site" evidence="1">
    <location>
        <position position="6"/>
    </location>
</feature>
<feature type="binding site" evidence="1">
    <location>
        <position position="164"/>
    </location>
    <ligand>
        <name>Na(+)</name>
        <dbReference type="ChEBI" id="CHEBI:29101"/>
    </ligand>
</feature>
<feature type="binding site" evidence="1">
    <location>
        <position position="167"/>
    </location>
    <ligand>
        <name>Na(+)</name>
        <dbReference type="ChEBI" id="CHEBI:29101"/>
    </ligand>
</feature>
<feature type="binding site" evidence="1">
    <location>
        <position position="170"/>
    </location>
    <ligand>
        <name>Na(+)</name>
        <dbReference type="ChEBI" id="CHEBI:29101"/>
    </ligand>
</feature>
<reference key="1">
    <citation type="journal article" date="2011" name="J. Bacteriol.">
        <title>Genome sequence of lineage III Listeria monocytogenes strain HCC23.</title>
        <authorList>
            <person name="Steele C.L."/>
            <person name="Donaldson J.R."/>
            <person name="Paul D."/>
            <person name="Banes M.M."/>
            <person name="Arick T."/>
            <person name="Bridges S.M."/>
            <person name="Lawrence M.L."/>
        </authorList>
    </citation>
    <scope>NUCLEOTIDE SEQUENCE [LARGE SCALE GENOMIC DNA]</scope>
    <source>
        <strain>HCC23</strain>
    </source>
</reference>
<comment type="function">
    <text evidence="1">Protease subunit of a proteasome-like degradation complex believed to be a general protein degrading machinery.</text>
</comment>
<comment type="catalytic activity">
    <reaction evidence="1">
        <text>ATP-dependent cleavage of peptide bonds with broad specificity.</text>
        <dbReference type="EC" id="3.4.25.2"/>
    </reaction>
</comment>
<comment type="activity regulation">
    <text evidence="1">Allosterically activated by HslU binding.</text>
</comment>
<comment type="subunit">
    <text evidence="1">A double ring-shaped homohexamer of HslV is capped on each side by a ring-shaped HslU homohexamer. The assembly of the HslU/HslV complex is dependent on binding of ATP.</text>
</comment>
<comment type="subcellular location">
    <subcellularLocation>
        <location evidence="1">Cytoplasm</location>
    </subcellularLocation>
</comment>
<comment type="similarity">
    <text evidence="1">Belongs to the peptidase T1B family. HslV subfamily.</text>
</comment>
<sequence length="179" mass="19406">MELHATTIFAVQHDGKAAMAGDGQVTLGESVVMKHTAKKVRRLFHDKVIAGFAGSVADAFTLFEKFEAKLNEYNGNLERASVELAQQWRSDSVLRKLEAMLIVMDKDTLLLVSGTGEVIEPDDGILAIGSGGNYALAAGRALKRHNGGQMEAKDIARHALEIASEICVFTNDHITVEEL</sequence>
<accession>B8DG53</accession>
<proteinExistence type="inferred from homology"/>
<keyword id="KW-0021">Allosteric enzyme</keyword>
<keyword id="KW-0963">Cytoplasm</keyword>
<keyword id="KW-0378">Hydrolase</keyword>
<keyword id="KW-0479">Metal-binding</keyword>
<keyword id="KW-0645">Protease</keyword>
<keyword id="KW-0915">Sodium</keyword>
<keyword id="KW-0888">Threonine protease</keyword>
<name>HSLV_LISMH</name>
<dbReference type="EC" id="3.4.25.2" evidence="1"/>
<dbReference type="EMBL" id="CP001175">
    <property type="protein sequence ID" value="ACK39643.1"/>
    <property type="molecule type" value="Genomic_DNA"/>
</dbReference>
<dbReference type="RefSeq" id="WP_003724001.1">
    <property type="nucleotide sequence ID" value="NC_011660.1"/>
</dbReference>
<dbReference type="SMR" id="B8DG53"/>
<dbReference type="MEROPS" id="T01.007"/>
<dbReference type="GeneID" id="93239152"/>
<dbReference type="KEGG" id="lmh:LMHCC_1298"/>
<dbReference type="HOGENOM" id="CLU_093872_1_1_9"/>
<dbReference type="GO" id="GO:0009376">
    <property type="term" value="C:HslUV protease complex"/>
    <property type="evidence" value="ECO:0007669"/>
    <property type="project" value="UniProtKB-UniRule"/>
</dbReference>
<dbReference type="GO" id="GO:0005839">
    <property type="term" value="C:proteasome core complex"/>
    <property type="evidence" value="ECO:0007669"/>
    <property type="project" value="InterPro"/>
</dbReference>
<dbReference type="GO" id="GO:0046872">
    <property type="term" value="F:metal ion binding"/>
    <property type="evidence" value="ECO:0007669"/>
    <property type="project" value="UniProtKB-KW"/>
</dbReference>
<dbReference type="GO" id="GO:0004298">
    <property type="term" value="F:threonine-type endopeptidase activity"/>
    <property type="evidence" value="ECO:0007669"/>
    <property type="project" value="UniProtKB-KW"/>
</dbReference>
<dbReference type="GO" id="GO:0051603">
    <property type="term" value="P:proteolysis involved in protein catabolic process"/>
    <property type="evidence" value="ECO:0007669"/>
    <property type="project" value="InterPro"/>
</dbReference>
<dbReference type="CDD" id="cd01913">
    <property type="entry name" value="protease_HslV"/>
    <property type="match status" value="1"/>
</dbReference>
<dbReference type="FunFam" id="3.60.20.10:FF:000002">
    <property type="entry name" value="ATP-dependent protease subunit HslV"/>
    <property type="match status" value="1"/>
</dbReference>
<dbReference type="Gene3D" id="3.60.20.10">
    <property type="entry name" value="Glutamine Phosphoribosylpyrophosphate, subunit 1, domain 1"/>
    <property type="match status" value="1"/>
</dbReference>
<dbReference type="HAMAP" id="MF_00248">
    <property type="entry name" value="HslV"/>
    <property type="match status" value="1"/>
</dbReference>
<dbReference type="InterPro" id="IPR022281">
    <property type="entry name" value="ATP-dep_Prtase_HsIV_su"/>
</dbReference>
<dbReference type="InterPro" id="IPR029055">
    <property type="entry name" value="Ntn_hydrolases_N"/>
</dbReference>
<dbReference type="InterPro" id="IPR001353">
    <property type="entry name" value="Proteasome_sua/b"/>
</dbReference>
<dbReference type="InterPro" id="IPR023333">
    <property type="entry name" value="Proteasome_suB-type"/>
</dbReference>
<dbReference type="NCBIfam" id="TIGR03692">
    <property type="entry name" value="ATP_dep_HslV"/>
    <property type="match status" value="1"/>
</dbReference>
<dbReference type="NCBIfam" id="NF003964">
    <property type="entry name" value="PRK05456.1"/>
    <property type="match status" value="1"/>
</dbReference>
<dbReference type="PANTHER" id="PTHR32194:SF0">
    <property type="entry name" value="ATP-DEPENDENT PROTEASE SUBUNIT HSLV"/>
    <property type="match status" value="1"/>
</dbReference>
<dbReference type="PANTHER" id="PTHR32194">
    <property type="entry name" value="METALLOPROTEASE TLDD"/>
    <property type="match status" value="1"/>
</dbReference>
<dbReference type="Pfam" id="PF00227">
    <property type="entry name" value="Proteasome"/>
    <property type="match status" value="1"/>
</dbReference>
<dbReference type="PIRSF" id="PIRSF039093">
    <property type="entry name" value="HslV"/>
    <property type="match status" value="1"/>
</dbReference>
<dbReference type="SUPFAM" id="SSF56235">
    <property type="entry name" value="N-terminal nucleophile aminohydrolases (Ntn hydrolases)"/>
    <property type="match status" value="1"/>
</dbReference>
<dbReference type="PROSITE" id="PS51476">
    <property type="entry name" value="PROTEASOME_BETA_2"/>
    <property type="match status" value="1"/>
</dbReference>
<gene>
    <name evidence="1" type="primary">hslV</name>
    <name type="ordered locus">LMHCC_1298</name>
</gene>
<organism>
    <name type="scientific">Listeria monocytogenes serotype 4a (strain HCC23)</name>
    <dbReference type="NCBI Taxonomy" id="552536"/>
    <lineage>
        <taxon>Bacteria</taxon>
        <taxon>Bacillati</taxon>
        <taxon>Bacillota</taxon>
        <taxon>Bacilli</taxon>
        <taxon>Bacillales</taxon>
        <taxon>Listeriaceae</taxon>
        <taxon>Listeria</taxon>
    </lineage>
</organism>